<proteinExistence type="evidence at transcript level"/>
<reference evidence="6" key="1">
    <citation type="journal article" date="2016" name="MBio">
        <title>Strain Prioritization and Genome Mining for Enediyne Natural Products.</title>
        <authorList>
            <person name="Yan X."/>
            <person name="Ge H."/>
            <person name="Huang T."/>
            <person name="Hindra X."/>
            <person name="Yang D."/>
            <person name="Teng Q."/>
            <person name="Crnovcic I."/>
            <person name="Li X."/>
            <person name="Rudolf J.D."/>
            <person name="Lohman J.R."/>
            <person name="Gansemans Y."/>
            <person name="Zhu X."/>
            <person name="Huang Y."/>
            <person name="Zhao L.X."/>
            <person name="Jiang Y."/>
            <person name="Van Nieuwerburgh F."/>
            <person name="Rader C."/>
            <person name="Duan Y."/>
            <person name="Shen B."/>
        </authorList>
    </citation>
    <scope>NUCLEOTIDE SEQUENCE [LARGE SCALE GENOMIC DNA]</scope>
    <source>
        <strain>CB03234</strain>
    </source>
</reference>
<reference key="2">
    <citation type="journal article" date="2019" name="Appl. Microbiol. Biotechnol.">
        <title>Discovery of gas vesicles in Streptomyces sp. CB03234-S and potential effects of gas vesicle gene overexpression on morphological and metabolic changes in streptomycetes.</title>
        <authorList>
            <person name="Huang R."/>
            <person name="Lin J."/>
            <person name="Gao D."/>
            <person name="Zhang F."/>
            <person name="Yi L."/>
            <person name="Huang Y."/>
            <person name="Yan X."/>
            <person name="Duan Y."/>
            <person name="Zhu X."/>
        </authorList>
    </citation>
    <scope>INDUCTION</scope>
    <scope>PROBABLE GAS VESICLE FORMATION</scope>
    <source>
        <strain>CB03234</strain>
    </source>
</reference>
<evidence type="ECO:0000250" key="1">
    <source>
        <dbReference type="UniProtKB" id="O51968"/>
    </source>
</evidence>
<evidence type="ECO:0000256" key="2">
    <source>
        <dbReference type="SAM" id="MobiDB-lite"/>
    </source>
</evidence>
<evidence type="ECO:0000269" key="3">
    <source>
    </source>
</evidence>
<evidence type="ECO:0000303" key="4">
    <source>
    </source>
</evidence>
<evidence type="ECO:0000305" key="5"/>
<evidence type="ECO:0000312" key="6">
    <source>
        <dbReference type="EMBL" id="OKK04379.1"/>
    </source>
</evidence>
<keyword id="KW-0304">Gas vesicle</keyword>
<keyword id="KW-1185">Reference proteome</keyword>
<organism>
    <name type="scientific">Streptomyces sp. (strain CB03234)</name>
    <dbReference type="NCBI Taxonomy" id="1703937"/>
    <lineage>
        <taxon>Bacteria</taxon>
        <taxon>Bacillati</taxon>
        <taxon>Actinomycetota</taxon>
        <taxon>Actinomycetes</taxon>
        <taxon>Kitasatosporales</taxon>
        <taxon>Streptomycetaceae</taxon>
        <taxon>Streptomyces</taxon>
    </lineage>
</organism>
<feature type="chain" id="PRO_0000458449" description="Gas vesicle protein O">
    <location>
        <begin position="1"/>
        <end position="128"/>
    </location>
</feature>
<feature type="region of interest" description="Disordered" evidence="2">
    <location>
        <begin position="1"/>
        <end position="49"/>
    </location>
</feature>
<feature type="compositionally biased region" description="Low complexity" evidence="2">
    <location>
        <begin position="7"/>
        <end position="22"/>
    </location>
</feature>
<feature type="compositionally biased region" description="Polar residues" evidence="2">
    <location>
        <begin position="29"/>
        <end position="41"/>
    </location>
</feature>
<dbReference type="EMBL" id="LIYH01000003">
    <property type="protein sequence ID" value="OKK04379.1"/>
    <property type="molecule type" value="Genomic_DNA"/>
</dbReference>
<dbReference type="RefSeq" id="WP_073754892.1">
    <property type="nucleotide sequence ID" value="NZ_LIYH01000003.1"/>
</dbReference>
<dbReference type="STRING" id="1703937.AMK26_13480"/>
<dbReference type="OrthoDB" id="163447at2"/>
<dbReference type="Proteomes" id="UP000186270">
    <property type="component" value="Unassembled WGS sequence"/>
</dbReference>
<dbReference type="GO" id="GO:0031411">
    <property type="term" value="C:gas vesicle"/>
    <property type="evidence" value="ECO:0007669"/>
    <property type="project" value="UniProtKB-SubCell"/>
</dbReference>
<dbReference type="GO" id="GO:0031412">
    <property type="term" value="P:gas vesicle organization"/>
    <property type="evidence" value="ECO:0007669"/>
    <property type="project" value="InterPro"/>
</dbReference>
<dbReference type="InterPro" id="IPR008634">
    <property type="entry name" value="Gas-vesicle_GvpO"/>
</dbReference>
<dbReference type="Pfam" id="PF05800">
    <property type="entry name" value="GvpO"/>
    <property type="match status" value="1"/>
</dbReference>
<dbReference type="PIRSF" id="PIRSF028743">
    <property type="entry name" value="GvpO_protein"/>
    <property type="match status" value="1"/>
</dbReference>
<gene>
    <name evidence="4" type="primary">gvpO</name>
    <name evidence="6" type="ORF">AMK26_13480</name>
</gene>
<accession>A0A1Q5LR10</accession>
<sequence>MANTPEDTQNTQNDSQNDSQNDSQKDTSARATSARAHQQPQEQPPSPMRVLRGACAQLAELTGMEAESVSSFERTEDGWTLNVEVLELARVPDTMSLLASYEVELDAHGELSGYRRVRRYERGRSDRS</sequence>
<comment type="function">
    <text evidence="1 5">A minor component of the gas vesicle. May play a role in transcription and/or RNA stability and in GV assembly (By similarity). Gas vesicles are hollow, gas filled proteinaceous nanostructures found in some microorganisms. It is not clear what function gas vesicles perform in soil bacteria (Probable).</text>
</comment>
<comment type="subcellular location">
    <subcellularLocation>
        <location evidence="1">Gas vesicle</location>
    </subcellularLocation>
</comment>
<comment type="induction">
    <text evidence="3">Gas vesicle production is induced by growth conditions that promote production of secondary metabolites tiancimycin A and B.</text>
</comment>
<comment type="miscellaneous">
    <text evidence="3">This strain probably produces some gas vesicles from the probable gvpO-gvpA-gvpF-gvpG-gvpJ-gvpL-gvpS-gvpK operon; it can be induced to produce more under certain growth conditions.</text>
</comment>
<comment type="similarity">
    <text evidence="5">Belongs to the gas vesicle GvpO family.</text>
</comment>
<protein>
    <recommendedName>
        <fullName evidence="4">Gas vesicle protein O</fullName>
        <shortName>GvpO</shortName>
    </recommendedName>
</protein>
<name>GVPO_STRX0</name>